<dbReference type="EC" id="1.14.99.46" evidence="1"/>
<dbReference type="EMBL" id="CP001298">
    <property type="protein sequence ID" value="ACK82904.1"/>
    <property type="molecule type" value="Genomic_DNA"/>
</dbReference>
<dbReference type="SMR" id="B7KWT7"/>
<dbReference type="KEGG" id="mch:Mchl_2057"/>
<dbReference type="HOGENOM" id="CLU_027853_1_1_5"/>
<dbReference type="Proteomes" id="UP000002385">
    <property type="component" value="Chromosome"/>
</dbReference>
<dbReference type="GO" id="GO:0008726">
    <property type="term" value="F:alkanesulfonate monooxygenase activity"/>
    <property type="evidence" value="ECO:0007669"/>
    <property type="project" value="TreeGrafter"/>
</dbReference>
<dbReference type="GO" id="GO:0052614">
    <property type="term" value="F:uracil oxygenase activity"/>
    <property type="evidence" value="ECO:0007669"/>
    <property type="project" value="UniProtKB-EC"/>
</dbReference>
<dbReference type="GO" id="GO:0046306">
    <property type="term" value="P:alkanesulfonate catabolic process"/>
    <property type="evidence" value="ECO:0007669"/>
    <property type="project" value="TreeGrafter"/>
</dbReference>
<dbReference type="GO" id="GO:0019740">
    <property type="term" value="P:nitrogen utilization"/>
    <property type="evidence" value="ECO:0007669"/>
    <property type="project" value="UniProtKB-UniRule"/>
</dbReference>
<dbReference type="GO" id="GO:0006212">
    <property type="term" value="P:uracil catabolic process"/>
    <property type="evidence" value="ECO:0007669"/>
    <property type="project" value="UniProtKB-UniRule"/>
</dbReference>
<dbReference type="CDD" id="cd01094">
    <property type="entry name" value="Alkanesulfonate_monoxygenase"/>
    <property type="match status" value="1"/>
</dbReference>
<dbReference type="FunFam" id="3.20.20.30:FF:000003">
    <property type="entry name" value="Pyrimidine monooxygenase RutA"/>
    <property type="match status" value="1"/>
</dbReference>
<dbReference type="Gene3D" id="3.20.20.30">
    <property type="entry name" value="Luciferase-like domain"/>
    <property type="match status" value="1"/>
</dbReference>
<dbReference type="HAMAP" id="MF_01699">
    <property type="entry name" value="RutA"/>
    <property type="match status" value="1"/>
</dbReference>
<dbReference type="InterPro" id="IPR011251">
    <property type="entry name" value="Luciferase-like_dom"/>
</dbReference>
<dbReference type="InterPro" id="IPR036661">
    <property type="entry name" value="Luciferase-like_sf"/>
</dbReference>
<dbReference type="InterPro" id="IPR019914">
    <property type="entry name" value="Pyrimidine_monooxygenase_RutA"/>
</dbReference>
<dbReference type="InterPro" id="IPR050172">
    <property type="entry name" value="SsuD_RutA_monooxygenase"/>
</dbReference>
<dbReference type="NCBIfam" id="TIGR03612">
    <property type="entry name" value="RutA"/>
    <property type="match status" value="1"/>
</dbReference>
<dbReference type="PANTHER" id="PTHR42847">
    <property type="entry name" value="ALKANESULFONATE MONOOXYGENASE"/>
    <property type="match status" value="1"/>
</dbReference>
<dbReference type="PANTHER" id="PTHR42847:SF4">
    <property type="entry name" value="ALKANESULFONATE MONOOXYGENASE-RELATED"/>
    <property type="match status" value="1"/>
</dbReference>
<dbReference type="Pfam" id="PF00296">
    <property type="entry name" value="Bac_luciferase"/>
    <property type="match status" value="1"/>
</dbReference>
<dbReference type="SUPFAM" id="SSF51679">
    <property type="entry name" value="Bacterial luciferase-like"/>
    <property type="match status" value="1"/>
</dbReference>
<comment type="function">
    <text evidence="1">Catalyzes the pyrimidine ring opening between N-3 and C-4 by an unusual flavin hydroperoxide-catalyzed mechanism, adding oxygen atoms in the process to yield ureidoacrylate peracid, that immediately reacts with FMN forming ureidoacrylate and FMN-N(5)-oxide. The FMN-N(5)-oxide reacts spontaneously with NADH to produce FMN. Requires the flavin reductase RutF to regenerate FMN in vivo.</text>
</comment>
<comment type="catalytic activity">
    <reaction evidence="1">
        <text>uracil + FMNH2 + NADH + O2 = (Z)-3-ureidoacrylate + FMN + NAD(+) + H2O + H(+)</text>
        <dbReference type="Rhea" id="RHEA:31587"/>
        <dbReference type="ChEBI" id="CHEBI:15377"/>
        <dbReference type="ChEBI" id="CHEBI:15378"/>
        <dbReference type="ChEBI" id="CHEBI:15379"/>
        <dbReference type="ChEBI" id="CHEBI:17568"/>
        <dbReference type="ChEBI" id="CHEBI:57540"/>
        <dbReference type="ChEBI" id="CHEBI:57618"/>
        <dbReference type="ChEBI" id="CHEBI:57945"/>
        <dbReference type="ChEBI" id="CHEBI:58210"/>
        <dbReference type="ChEBI" id="CHEBI:59891"/>
        <dbReference type="EC" id="1.14.99.46"/>
    </reaction>
</comment>
<comment type="catalytic activity">
    <reaction evidence="1">
        <text>thymine + FMNH2 + NADH + O2 = (Z)-2-methylureidoacrylate + FMN + NAD(+) + H2O + H(+)</text>
        <dbReference type="Rhea" id="RHEA:31599"/>
        <dbReference type="ChEBI" id="CHEBI:15377"/>
        <dbReference type="ChEBI" id="CHEBI:15378"/>
        <dbReference type="ChEBI" id="CHEBI:15379"/>
        <dbReference type="ChEBI" id="CHEBI:17821"/>
        <dbReference type="ChEBI" id="CHEBI:57540"/>
        <dbReference type="ChEBI" id="CHEBI:57618"/>
        <dbReference type="ChEBI" id="CHEBI:57945"/>
        <dbReference type="ChEBI" id="CHEBI:58210"/>
        <dbReference type="ChEBI" id="CHEBI:143783"/>
        <dbReference type="EC" id="1.14.99.46"/>
    </reaction>
</comment>
<comment type="similarity">
    <text evidence="1">Belongs to the NtaA/SnaA/DszA monooxygenase family. RutA subfamily.</text>
</comment>
<sequence length="376" mass="41191">MTQAQDHAKDHAMNIGVFIPIGNNGWLLSENAPQYMPSFELNKQITLKAEQHGLDFVLSMIKLRGFGGKTEFWDHNLESFTLMAGLAAVTSRIKLYATAPTLCLPPAIVARMASTIDSISNGRFGLNLVTGWQRPEYAQMGLWPGDEYFGRRYEYLSEYAQVLRELWETGRSDLKGEFFQMEDCRLSPRPQAEMKIICAGQSAAGMAFTATYADYNFCFGKGVNTPTAFAPTVERLEEAKAKTGRDVSSYVLFMVISDETDEAARAKWEHYKAGADAEAIAWLGLQGAADTKSGADTNIRQMADPTSAVNINMGTLVGSHATVAALLDEVVTVPGTGGVLLVFDDFLKGLDDFGTKIQPLMRSRRHVTGEALAEVA</sequence>
<protein>
    <recommendedName>
        <fullName evidence="1">Pyrimidine monooxygenase RutA</fullName>
        <ecNumber evidence="1">1.14.99.46</ecNumber>
    </recommendedName>
</protein>
<accession>B7KWT7</accession>
<reference key="1">
    <citation type="submission" date="2008-12" db="EMBL/GenBank/DDBJ databases">
        <title>Complete sequence of chromosome of Methylobacterium chloromethanicum CM4.</title>
        <authorList>
            <consortium name="US DOE Joint Genome Institute"/>
            <person name="Lucas S."/>
            <person name="Copeland A."/>
            <person name="Lapidus A."/>
            <person name="Glavina del Rio T."/>
            <person name="Dalin E."/>
            <person name="Tice H."/>
            <person name="Bruce D."/>
            <person name="Goodwin L."/>
            <person name="Pitluck S."/>
            <person name="Chertkov O."/>
            <person name="Brettin T."/>
            <person name="Detter J.C."/>
            <person name="Han C."/>
            <person name="Larimer F."/>
            <person name="Land M."/>
            <person name="Hauser L."/>
            <person name="Kyrpides N."/>
            <person name="Mikhailova N."/>
            <person name="Marx C."/>
            <person name="Richardson P."/>
        </authorList>
    </citation>
    <scope>NUCLEOTIDE SEQUENCE [LARGE SCALE GENOMIC DNA]</scope>
    <source>
        <strain>CM4 / NCIMB 13688</strain>
    </source>
</reference>
<feature type="chain" id="PRO_0000402628" description="Pyrimidine monooxygenase RutA">
    <location>
        <begin position="1"/>
        <end position="376"/>
    </location>
</feature>
<feature type="binding site" evidence="1">
    <location>
        <begin position="61"/>
        <end position="62"/>
    </location>
    <ligand>
        <name>FMN</name>
        <dbReference type="ChEBI" id="CHEBI:58210"/>
    </ligand>
</feature>
<feature type="binding site" evidence="1">
    <location>
        <position position="127"/>
    </location>
    <ligand>
        <name>FMN</name>
        <dbReference type="ChEBI" id="CHEBI:58210"/>
    </ligand>
</feature>
<feature type="binding site" evidence="1">
    <location>
        <position position="136"/>
    </location>
    <ligand>
        <name>FMN</name>
        <dbReference type="ChEBI" id="CHEBI:58210"/>
    </ligand>
</feature>
<feature type="binding site" evidence="1">
    <location>
        <begin position="152"/>
        <end position="153"/>
    </location>
    <ligand>
        <name>FMN</name>
        <dbReference type="ChEBI" id="CHEBI:58210"/>
    </ligand>
</feature>
<feature type="binding site" evidence="1">
    <location>
        <position position="202"/>
    </location>
    <ligand>
        <name>FMN</name>
        <dbReference type="ChEBI" id="CHEBI:58210"/>
    </ligand>
</feature>
<evidence type="ECO:0000255" key="1">
    <source>
        <dbReference type="HAMAP-Rule" id="MF_01699"/>
    </source>
</evidence>
<keyword id="KW-0285">Flavoprotein</keyword>
<keyword id="KW-0288">FMN</keyword>
<keyword id="KW-0503">Monooxygenase</keyword>
<keyword id="KW-0521">NADP</keyword>
<keyword id="KW-0560">Oxidoreductase</keyword>
<name>RUTA_METC4</name>
<gene>
    <name evidence="1" type="primary">rutA</name>
    <name type="ordered locus">Mchl_2057</name>
</gene>
<organism>
    <name type="scientific">Methylorubrum extorquens (strain CM4 / NCIMB 13688)</name>
    <name type="common">Methylobacterium extorquens</name>
    <dbReference type="NCBI Taxonomy" id="440085"/>
    <lineage>
        <taxon>Bacteria</taxon>
        <taxon>Pseudomonadati</taxon>
        <taxon>Pseudomonadota</taxon>
        <taxon>Alphaproteobacteria</taxon>
        <taxon>Hyphomicrobiales</taxon>
        <taxon>Methylobacteriaceae</taxon>
        <taxon>Methylorubrum</taxon>
    </lineage>
</organism>
<proteinExistence type="inferred from homology"/>